<organism>
    <name type="scientific">Desulfotalea psychrophila (strain LSv54 / DSM 12343)</name>
    <dbReference type="NCBI Taxonomy" id="177439"/>
    <lineage>
        <taxon>Bacteria</taxon>
        <taxon>Pseudomonadati</taxon>
        <taxon>Thermodesulfobacteriota</taxon>
        <taxon>Desulfobulbia</taxon>
        <taxon>Desulfobulbales</taxon>
        <taxon>Desulfocapsaceae</taxon>
        <taxon>Desulfotalea</taxon>
    </lineage>
</organism>
<name>COAX_DESPS</name>
<evidence type="ECO:0000255" key="1">
    <source>
        <dbReference type="HAMAP-Rule" id="MF_01274"/>
    </source>
</evidence>
<comment type="function">
    <text evidence="1">Catalyzes the phosphorylation of pantothenate (Pan), the first step in CoA biosynthesis.</text>
</comment>
<comment type="catalytic activity">
    <reaction evidence="1">
        <text>(R)-pantothenate + ATP = (R)-4'-phosphopantothenate + ADP + H(+)</text>
        <dbReference type="Rhea" id="RHEA:16373"/>
        <dbReference type="ChEBI" id="CHEBI:10986"/>
        <dbReference type="ChEBI" id="CHEBI:15378"/>
        <dbReference type="ChEBI" id="CHEBI:29032"/>
        <dbReference type="ChEBI" id="CHEBI:30616"/>
        <dbReference type="ChEBI" id="CHEBI:456216"/>
        <dbReference type="EC" id="2.7.1.33"/>
    </reaction>
</comment>
<comment type="cofactor">
    <cofactor evidence="1">
        <name>NH4(+)</name>
        <dbReference type="ChEBI" id="CHEBI:28938"/>
    </cofactor>
    <cofactor evidence="1">
        <name>K(+)</name>
        <dbReference type="ChEBI" id="CHEBI:29103"/>
    </cofactor>
    <text evidence="1">A monovalent cation. Ammonium or potassium.</text>
</comment>
<comment type="pathway">
    <text evidence="1">Cofactor biosynthesis; coenzyme A biosynthesis; CoA from (R)-pantothenate: step 1/5.</text>
</comment>
<comment type="subunit">
    <text evidence="1">Homodimer.</text>
</comment>
<comment type="subcellular location">
    <subcellularLocation>
        <location evidence="1">Cytoplasm</location>
    </subcellularLocation>
</comment>
<comment type="similarity">
    <text evidence="1">Belongs to the type III pantothenate kinase family.</text>
</comment>
<protein>
    <recommendedName>
        <fullName evidence="1">Type III pantothenate kinase</fullName>
        <ecNumber evidence="1">2.7.1.33</ecNumber>
    </recommendedName>
    <alternativeName>
        <fullName evidence="1">PanK-III</fullName>
    </alternativeName>
    <alternativeName>
        <fullName evidence="1">Pantothenic acid kinase</fullName>
    </alternativeName>
</protein>
<feature type="chain" id="PRO_0000267522" description="Type III pantothenate kinase">
    <location>
        <begin position="1"/>
        <end position="266"/>
    </location>
</feature>
<feature type="active site" description="Proton acceptor" evidence="1">
    <location>
        <position position="114"/>
    </location>
</feature>
<feature type="binding site" evidence="1">
    <location>
        <begin position="6"/>
        <end position="13"/>
    </location>
    <ligand>
        <name>ATP</name>
        <dbReference type="ChEBI" id="CHEBI:30616"/>
    </ligand>
</feature>
<feature type="binding site" evidence="1">
    <location>
        <begin position="112"/>
        <end position="115"/>
    </location>
    <ligand>
        <name>substrate</name>
    </ligand>
</feature>
<feature type="binding site" evidence="1">
    <location>
        <position position="134"/>
    </location>
    <ligand>
        <name>K(+)</name>
        <dbReference type="ChEBI" id="CHEBI:29103"/>
    </ligand>
</feature>
<feature type="binding site" evidence="1">
    <location>
        <position position="137"/>
    </location>
    <ligand>
        <name>ATP</name>
        <dbReference type="ChEBI" id="CHEBI:30616"/>
    </ligand>
</feature>
<feature type="binding site" evidence="1">
    <location>
        <position position="190"/>
    </location>
    <ligand>
        <name>substrate</name>
    </ligand>
</feature>
<accession>Q6AKW8</accession>
<proteinExistence type="inferred from homology"/>
<gene>
    <name evidence="1" type="primary">coaX</name>
    <name type="ordered locus">DP2278</name>
</gene>
<reference key="1">
    <citation type="journal article" date="2004" name="Environ. Microbiol.">
        <title>The genome of Desulfotalea psychrophila, a sulfate-reducing bacterium from permanently cold Arctic sediments.</title>
        <authorList>
            <person name="Rabus R."/>
            <person name="Ruepp A."/>
            <person name="Frickey T."/>
            <person name="Rattei T."/>
            <person name="Fartmann B."/>
            <person name="Stark M."/>
            <person name="Bauer M."/>
            <person name="Zibat A."/>
            <person name="Lombardot T."/>
            <person name="Becker I."/>
            <person name="Amann J."/>
            <person name="Gellner K."/>
            <person name="Teeling H."/>
            <person name="Leuschner W.D."/>
            <person name="Gloeckner F.-O."/>
            <person name="Lupas A.N."/>
            <person name="Amann R."/>
            <person name="Klenk H.-P."/>
        </authorList>
    </citation>
    <scope>NUCLEOTIDE SEQUENCE [LARGE SCALE GENOMIC DNA]</scope>
    <source>
        <strain>DSM 12343 / LSv54</strain>
    </source>
</reference>
<sequence>MILVIDVGNSHTVTGLYDHGKLIGHWRLKTDRDRTSDELAIRYHGLFIMEGIDPRQITDIVLASVVPTLSSAWIRCCERHFGKHLNQPVMDLSVTKLAPLVRVETDNPHEVGIDRLVNAYGAWHTRKTDLIVIDFGTAITFDCVTSDCVYIGGVILPGIAISLDALATRTAKLPMVDVRDVPSSLIGKNTVHAMQSGILYGYGAMVDGIVEGIQKEMLGGKRRAEVIATGGMANLIEPFTTTIEHIDKLLTLDAMELILHALKKKQ</sequence>
<keyword id="KW-0067">ATP-binding</keyword>
<keyword id="KW-0173">Coenzyme A biosynthesis</keyword>
<keyword id="KW-0963">Cytoplasm</keyword>
<keyword id="KW-0418">Kinase</keyword>
<keyword id="KW-0479">Metal-binding</keyword>
<keyword id="KW-0547">Nucleotide-binding</keyword>
<keyword id="KW-0630">Potassium</keyword>
<keyword id="KW-1185">Reference proteome</keyword>
<keyword id="KW-0808">Transferase</keyword>
<dbReference type="EC" id="2.7.1.33" evidence="1"/>
<dbReference type="EMBL" id="CR522870">
    <property type="protein sequence ID" value="CAG37007.1"/>
    <property type="molecule type" value="Genomic_DNA"/>
</dbReference>
<dbReference type="RefSeq" id="WP_011189519.1">
    <property type="nucleotide sequence ID" value="NC_006138.1"/>
</dbReference>
<dbReference type="SMR" id="Q6AKW8"/>
<dbReference type="STRING" id="177439.DP2278"/>
<dbReference type="KEGG" id="dps:DP2278"/>
<dbReference type="eggNOG" id="COG1521">
    <property type="taxonomic scope" value="Bacteria"/>
</dbReference>
<dbReference type="HOGENOM" id="CLU_066627_1_0_7"/>
<dbReference type="OrthoDB" id="9804707at2"/>
<dbReference type="UniPathway" id="UPA00241">
    <property type="reaction ID" value="UER00352"/>
</dbReference>
<dbReference type="Proteomes" id="UP000000602">
    <property type="component" value="Chromosome"/>
</dbReference>
<dbReference type="GO" id="GO:0005737">
    <property type="term" value="C:cytoplasm"/>
    <property type="evidence" value="ECO:0007669"/>
    <property type="project" value="UniProtKB-SubCell"/>
</dbReference>
<dbReference type="GO" id="GO:0005524">
    <property type="term" value="F:ATP binding"/>
    <property type="evidence" value="ECO:0007669"/>
    <property type="project" value="UniProtKB-UniRule"/>
</dbReference>
<dbReference type="GO" id="GO:0046872">
    <property type="term" value="F:metal ion binding"/>
    <property type="evidence" value="ECO:0007669"/>
    <property type="project" value="UniProtKB-KW"/>
</dbReference>
<dbReference type="GO" id="GO:0004594">
    <property type="term" value="F:pantothenate kinase activity"/>
    <property type="evidence" value="ECO:0007669"/>
    <property type="project" value="UniProtKB-UniRule"/>
</dbReference>
<dbReference type="GO" id="GO:0015937">
    <property type="term" value="P:coenzyme A biosynthetic process"/>
    <property type="evidence" value="ECO:0007669"/>
    <property type="project" value="UniProtKB-UniRule"/>
</dbReference>
<dbReference type="CDD" id="cd24015">
    <property type="entry name" value="ASKHA_NBD_PanK-III"/>
    <property type="match status" value="1"/>
</dbReference>
<dbReference type="Gene3D" id="3.30.420.40">
    <property type="match status" value="2"/>
</dbReference>
<dbReference type="HAMAP" id="MF_01274">
    <property type="entry name" value="Pantothen_kinase_3"/>
    <property type="match status" value="1"/>
</dbReference>
<dbReference type="InterPro" id="IPR043129">
    <property type="entry name" value="ATPase_NBD"/>
</dbReference>
<dbReference type="InterPro" id="IPR004619">
    <property type="entry name" value="Type_III_PanK"/>
</dbReference>
<dbReference type="NCBIfam" id="TIGR00671">
    <property type="entry name" value="baf"/>
    <property type="match status" value="1"/>
</dbReference>
<dbReference type="NCBIfam" id="NF009855">
    <property type="entry name" value="PRK13321.1"/>
    <property type="match status" value="1"/>
</dbReference>
<dbReference type="PANTHER" id="PTHR34265">
    <property type="entry name" value="TYPE III PANTOTHENATE KINASE"/>
    <property type="match status" value="1"/>
</dbReference>
<dbReference type="PANTHER" id="PTHR34265:SF1">
    <property type="entry name" value="TYPE III PANTOTHENATE KINASE"/>
    <property type="match status" value="1"/>
</dbReference>
<dbReference type="Pfam" id="PF03309">
    <property type="entry name" value="Pan_kinase"/>
    <property type="match status" value="1"/>
</dbReference>
<dbReference type="SUPFAM" id="SSF53067">
    <property type="entry name" value="Actin-like ATPase domain"/>
    <property type="match status" value="2"/>
</dbReference>